<protein>
    <recommendedName>
        <fullName>Subtilisin-like protease 2</fullName>
        <ecNumber>3.4.21.-</ecNumber>
    </recommendedName>
</protein>
<feature type="signal peptide" evidence="2">
    <location>
        <begin position="1"/>
        <end position="16"/>
    </location>
</feature>
<feature type="propeptide" id="PRO_0000397782" evidence="1">
    <location>
        <begin position="17"/>
        <end position="122"/>
    </location>
</feature>
<feature type="chain" id="PRO_0000397783" description="Subtilisin-like protease 2">
    <location>
        <begin position="123"/>
        <end position="421"/>
    </location>
</feature>
<feature type="domain" description="Inhibitor I9" evidence="2">
    <location>
        <begin position="36"/>
        <end position="122"/>
    </location>
</feature>
<feature type="domain" description="Peptidase S8" evidence="3">
    <location>
        <begin position="131"/>
        <end position="421"/>
    </location>
</feature>
<feature type="active site" description="Charge relay system" evidence="3">
    <location>
        <position position="169"/>
    </location>
</feature>
<feature type="active site" description="Charge relay system" evidence="3">
    <location>
        <position position="201"/>
    </location>
</feature>
<feature type="active site" description="Charge relay system" evidence="3">
    <location>
        <position position="357"/>
    </location>
</feature>
<feature type="glycosylation site" description="N-linked (GlcNAc...) asparagine" evidence="2">
    <location>
        <position position="248"/>
    </location>
</feature>
<feature type="glycosylation site" description="N-linked (GlcNAc...) asparagine" evidence="2">
    <location>
        <position position="261"/>
    </location>
</feature>
<feature type="glycosylation site" description="N-linked (GlcNAc...) asparagine" evidence="2">
    <location>
        <position position="348"/>
    </location>
</feature>
<feature type="glycosylation site" description="N-linked (GlcNAc...) asparagine" evidence="2">
    <location>
        <position position="388"/>
    </location>
</feature>
<name>SUB2_ARTBC</name>
<reference key="1">
    <citation type="journal article" date="2011" name="Genome Biol.">
        <title>Comparative and functional genomics provide insights into the pathogenicity of dermatophytic fungi.</title>
        <authorList>
            <person name="Burmester A."/>
            <person name="Shelest E."/>
            <person name="Gloeckner G."/>
            <person name="Heddergott C."/>
            <person name="Schindler S."/>
            <person name="Staib P."/>
            <person name="Heidel A."/>
            <person name="Felder M."/>
            <person name="Petzold A."/>
            <person name="Szafranski K."/>
            <person name="Feuermann M."/>
            <person name="Pedruzzi I."/>
            <person name="Priebe S."/>
            <person name="Groth M."/>
            <person name="Winkler R."/>
            <person name="Li W."/>
            <person name="Kniemeyer O."/>
            <person name="Schroeckh V."/>
            <person name="Hertweck C."/>
            <person name="Hube B."/>
            <person name="White T.C."/>
            <person name="Platzer M."/>
            <person name="Guthke R."/>
            <person name="Heitman J."/>
            <person name="Woestemeyer J."/>
            <person name="Zipfel P.F."/>
            <person name="Monod M."/>
            <person name="Brakhage A.A."/>
        </authorList>
    </citation>
    <scope>NUCLEOTIDE SEQUENCE [LARGE SCALE GENOMIC DNA]</scope>
    <source>
        <strain>ATCC MYA-4681 / CBS 112371</strain>
    </source>
</reference>
<reference key="2">
    <citation type="journal article" date="2010" name="Microbiology">
        <title>Differential gene expression in the pathogenic dermatophyte Arthroderma benhamiae in vitro versus during infection.</title>
        <authorList>
            <person name="Staib P."/>
            <person name="Zaugg C."/>
            <person name="Mignon B."/>
            <person name="Weber J."/>
            <person name="Grumbt M."/>
            <person name="Pradervand S."/>
            <person name="Harshman K."/>
            <person name="Monod M."/>
        </authorList>
    </citation>
    <scope>INDUCTION</scope>
</reference>
<organism>
    <name type="scientific">Arthroderma benhamiae (strain ATCC MYA-4681 / CBS 112371)</name>
    <name type="common">Trichophyton mentagrophytes</name>
    <dbReference type="NCBI Taxonomy" id="663331"/>
    <lineage>
        <taxon>Eukaryota</taxon>
        <taxon>Fungi</taxon>
        <taxon>Dikarya</taxon>
        <taxon>Ascomycota</taxon>
        <taxon>Pezizomycotina</taxon>
        <taxon>Eurotiomycetes</taxon>
        <taxon>Eurotiomycetidae</taxon>
        <taxon>Onygenales</taxon>
        <taxon>Arthrodermataceae</taxon>
        <taxon>Trichophyton</taxon>
    </lineage>
</organism>
<sequence length="421" mass="45608">MQLLNFGLLLLPFVAGDLAPQPEPLLAGPSDVVPGQYIVTLKEGLTSAQIRDHKKWVSSVHRANLDSFAAGASGVETEGIMKHFHIHDLNMYSGGFDEKTVEDLSRNPYVKSVHPDQHVYLAKTVTQRQARWGLGYMSSKGKPVPLHSTLVDYSYDDKAGEGVWAYVLDTGINVNHVEFEGRGILGHNAIPNKPHTDEFGHGTYVAGIIAGKTYGVAKKANVVSAKAFDTGSSTYNYILETYDWIVRNITDSNRKNKAVINLSISGAKYQPFDDAVEKAFKAGITTVVAAGNDGKDAKNNTPASSPNAITVGAVRWENTRPSFSNYGKLVDIWAPGELIKSCWKGGNNATSTQSGTSAASPHVAGLVAYLMSIENLPSPSAVTARVLNLTIPNLVKDAKDSPNRVAYNGIQERKFTLPKYY</sequence>
<accession>D4AZ75</accession>
<gene>
    <name type="primary">SUB2</name>
    <name type="ORF">ARB_01495</name>
</gene>
<evidence type="ECO:0000250" key="1"/>
<evidence type="ECO:0000255" key="2"/>
<evidence type="ECO:0000255" key="3">
    <source>
        <dbReference type="PROSITE-ProRule" id="PRU01240"/>
    </source>
</evidence>
<evidence type="ECO:0000269" key="4">
    <source>
    </source>
</evidence>
<evidence type="ECO:0000305" key="5"/>
<comment type="function">
    <text evidence="1">Secreted subtilisin-like serine protease with keratinolytic activity that contributes to pathogenicity.</text>
</comment>
<comment type="subcellular location">
    <subcellularLocation>
        <location evidence="1">Secreted</location>
    </subcellularLocation>
</comment>
<comment type="induction">
    <text evidence="4">Expression is up-regulated during infection.</text>
</comment>
<comment type="similarity">
    <text evidence="5">Belongs to the peptidase S8 family.</text>
</comment>
<comment type="sequence caution" evidence="5">
    <conflict type="erroneous gene model prediction">
        <sequence resource="EMBL-CDS" id="EFE31595"/>
    </conflict>
</comment>
<keyword id="KW-0325">Glycoprotein</keyword>
<keyword id="KW-0378">Hydrolase</keyword>
<keyword id="KW-0645">Protease</keyword>
<keyword id="KW-1185">Reference proteome</keyword>
<keyword id="KW-0964">Secreted</keyword>
<keyword id="KW-0720">Serine protease</keyword>
<keyword id="KW-0732">Signal</keyword>
<keyword id="KW-0843">Virulence</keyword>
<keyword id="KW-0865">Zymogen</keyword>
<dbReference type="EC" id="3.4.21.-"/>
<dbReference type="EMBL" id="ABSU01000020">
    <property type="protein sequence ID" value="EFE31595.1"/>
    <property type="status" value="ALT_SEQ"/>
    <property type="molecule type" value="Genomic_DNA"/>
</dbReference>
<dbReference type="RefSeq" id="XP_003012235.1">
    <property type="nucleotide sequence ID" value="XM_003012189.1"/>
</dbReference>
<dbReference type="SMR" id="D4AZ75"/>
<dbReference type="GlyCosmos" id="D4AZ75">
    <property type="glycosylation" value="4 sites, No reported glycans"/>
</dbReference>
<dbReference type="GeneID" id="9519803"/>
<dbReference type="KEGG" id="abe:ARB_01495"/>
<dbReference type="eggNOG" id="KOG1153">
    <property type="taxonomic scope" value="Eukaryota"/>
</dbReference>
<dbReference type="HOGENOM" id="CLU_011263_1_4_1"/>
<dbReference type="OrthoDB" id="206201at2759"/>
<dbReference type="Proteomes" id="UP000008866">
    <property type="component" value="Unassembled WGS sequence"/>
</dbReference>
<dbReference type="GO" id="GO:0005576">
    <property type="term" value="C:extracellular region"/>
    <property type="evidence" value="ECO:0007669"/>
    <property type="project" value="UniProtKB-SubCell"/>
</dbReference>
<dbReference type="GO" id="GO:0004252">
    <property type="term" value="F:serine-type endopeptidase activity"/>
    <property type="evidence" value="ECO:0007669"/>
    <property type="project" value="InterPro"/>
</dbReference>
<dbReference type="GO" id="GO:0006508">
    <property type="term" value="P:proteolysis"/>
    <property type="evidence" value="ECO:0007669"/>
    <property type="project" value="UniProtKB-KW"/>
</dbReference>
<dbReference type="CDD" id="cd04077">
    <property type="entry name" value="Peptidases_S8_PCSK9_ProteinaseK_like"/>
    <property type="match status" value="1"/>
</dbReference>
<dbReference type="FunFam" id="3.40.50.200:FF:000007">
    <property type="entry name" value="Subtilisin-like serine protease"/>
    <property type="match status" value="1"/>
</dbReference>
<dbReference type="Gene3D" id="3.30.70.80">
    <property type="entry name" value="Peptidase S8 propeptide/proteinase inhibitor I9"/>
    <property type="match status" value="1"/>
</dbReference>
<dbReference type="Gene3D" id="3.40.50.200">
    <property type="entry name" value="Peptidase S8/S53 domain"/>
    <property type="match status" value="1"/>
</dbReference>
<dbReference type="InterPro" id="IPR034193">
    <property type="entry name" value="PCSK9_ProteinaseK-like"/>
</dbReference>
<dbReference type="InterPro" id="IPR000209">
    <property type="entry name" value="Peptidase_S8/S53_dom"/>
</dbReference>
<dbReference type="InterPro" id="IPR036852">
    <property type="entry name" value="Peptidase_S8/S53_dom_sf"/>
</dbReference>
<dbReference type="InterPro" id="IPR023827">
    <property type="entry name" value="Peptidase_S8_Asp-AS"/>
</dbReference>
<dbReference type="InterPro" id="IPR022398">
    <property type="entry name" value="Peptidase_S8_His-AS"/>
</dbReference>
<dbReference type="InterPro" id="IPR023828">
    <property type="entry name" value="Peptidase_S8_Ser-AS"/>
</dbReference>
<dbReference type="InterPro" id="IPR050131">
    <property type="entry name" value="Peptidase_S8_subtilisin-like"/>
</dbReference>
<dbReference type="InterPro" id="IPR015500">
    <property type="entry name" value="Peptidase_S8_subtilisin-rel"/>
</dbReference>
<dbReference type="InterPro" id="IPR010259">
    <property type="entry name" value="S8pro/Inhibitor_I9"/>
</dbReference>
<dbReference type="InterPro" id="IPR037045">
    <property type="entry name" value="S8pro/Inhibitor_I9_sf"/>
</dbReference>
<dbReference type="PANTHER" id="PTHR43806:SF58">
    <property type="entry name" value="ALKALINE PROTEASE 1-RELATED"/>
    <property type="match status" value="1"/>
</dbReference>
<dbReference type="PANTHER" id="PTHR43806">
    <property type="entry name" value="PEPTIDASE S8"/>
    <property type="match status" value="1"/>
</dbReference>
<dbReference type="Pfam" id="PF05922">
    <property type="entry name" value="Inhibitor_I9"/>
    <property type="match status" value="1"/>
</dbReference>
<dbReference type="Pfam" id="PF00082">
    <property type="entry name" value="Peptidase_S8"/>
    <property type="match status" value="1"/>
</dbReference>
<dbReference type="PRINTS" id="PR00723">
    <property type="entry name" value="SUBTILISIN"/>
</dbReference>
<dbReference type="SUPFAM" id="SSF52743">
    <property type="entry name" value="Subtilisin-like"/>
    <property type="match status" value="1"/>
</dbReference>
<dbReference type="PROSITE" id="PS51892">
    <property type="entry name" value="SUBTILASE"/>
    <property type="match status" value="1"/>
</dbReference>
<dbReference type="PROSITE" id="PS00136">
    <property type="entry name" value="SUBTILASE_ASP"/>
    <property type="match status" value="1"/>
</dbReference>
<dbReference type="PROSITE" id="PS00137">
    <property type="entry name" value="SUBTILASE_HIS"/>
    <property type="match status" value="1"/>
</dbReference>
<dbReference type="PROSITE" id="PS00138">
    <property type="entry name" value="SUBTILASE_SER"/>
    <property type="match status" value="1"/>
</dbReference>
<proteinExistence type="evidence at transcript level"/>